<evidence type="ECO:0000255" key="1">
    <source>
        <dbReference type="HAMAP-Rule" id="MF_00060"/>
    </source>
</evidence>
<name>SURE_SYNS9</name>
<accession>Q3AVE5</accession>
<feature type="chain" id="PRO_0000235656" description="5'-nucleotidase SurE">
    <location>
        <begin position="1"/>
        <end position="269"/>
    </location>
</feature>
<feature type="binding site" evidence="1">
    <location>
        <position position="11"/>
    </location>
    <ligand>
        <name>a divalent metal cation</name>
        <dbReference type="ChEBI" id="CHEBI:60240"/>
    </ligand>
</feature>
<feature type="binding site" evidence="1">
    <location>
        <position position="12"/>
    </location>
    <ligand>
        <name>a divalent metal cation</name>
        <dbReference type="ChEBI" id="CHEBI:60240"/>
    </ligand>
</feature>
<feature type="binding site" evidence="1">
    <location>
        <position position="43"/>
    </location>
    <ligand>
        <name>a divalent metal cation</name>
        <dbReference type="ChEBI" id="CHEBI:60240"/>
    </ligand>
</feature>
<feature type="binding site" evidence="1">
    <location>
        <position position="101"/>
    </location>
    <ligand>
        <name>a divalent metal cation</name>
        <dbReference type="ChEBI" id="CHEBI:60240"/>
    </ligand>
</feature>
<organism>
    <name type="scientific">Synechococcus sp. (strain CC9902)</name>
    <dbReference type="NCBI Taxonomy" id="316279"/>
    <lineage>
        <taxon>Bacteria</taxon>
        <taxon>Bacillati</taxon>
        <taxon>Cyanobacteriota</taxon>
        <taxon>Cyanophyceae</taxon>
        <taxon>Synechococcales</taxon>
        <taxon>Synechococcaceae</taxon>
        <taxon>Synechococcus</taxon>
    </lineage>
</organism>
<comment type="function">
    <text evidence="1">Nucleotidase that shows phosphatase activity on nucleoside 5'-monophosphates.</text>
</comment>
<comment type="catalytic activity">
    <reaction evidence="1">
        <text>a ribonucleoside 5'-phosphate + H2O = a ribonucleoside + phosphate</text>
        <dbReference type="Rhea" id="RHEA:12484"/>
        <dbReference type="ChEBI" id="CHEBI:15377"/>
        <dbReference type="ChEBI" id="CHEBI:18254"/>
        <dbReference type="ChEBI" id="CHEBI:43474"/>
        <dbReference type="ChEBI" id="CHEBI:58043"/>
        <dbReference type="EC" id="3.1.3.5"/>
    </reaction>
</comment>
<comment type="cofactor">
    <cofactor evidence="1">
        <name>a divalent metal cation</name>
        <dbReference type="ChEBI" id="CHEBI:60240"/>
    </cofactor>
    <text evidence="1">Binds 1 divalent metal cation per subunit.</text>
</comment>
<comment type="subcellular location">
    <subcellularLocation>
        <location evidence="1">Cytoplasm</location>
    </subcellularLocation>
</comment>
<comment type="similarity">
    <text evidence="1">Belongs to the SurE nucleotidase family.</text>
</comment>
<gene>
    <name evidence="1" type="primary">surE</name>
    <name type="ordered locus">Syncc9902_1499</name>
</gene>
<protein>
    <recommendedName>
        <fullName evidence="1">5'-nucleotidase SurE</fullName>
        <ecNumber evidence="1">3.1.3.5</ecNumber>
    </recommendedName>
    <alternativeName>
        <fullName evidence="1">Nucleoside 5'-monophosphate phosphohydrolase</fullName>
    </alternativeName>
</protein>
<sequence>MAPLRILISNDDGVFADGIRTLAAAAAARGHEVTVVCPDQERSATGHGLTLQSPIRAERADELFAPGVTAWACSGTPADCMKLALFELVKHKPDLVLSGINHGPNLGTDVFCSGTVAAAMEGTLEGIRSLAVSSACFQWRQFQAAADLAMDVSEQAIHGNWPENMLLNLNIPPCAKEVMGPLRWTRLSIRRYDEQFSSRKDPRGRAYYWLAGEVVNDLESAGEGPKDWPSDVAQIHKNCPSLTPIQPDLFWRGPLGDLPQLKLNDQSVH</sequence>
<proteinExistence type="inferred from homology"/>
<dbReference type="EC" id="3.1.3.5" evidence="1"/>
<dbReference type="EMBL" id="CP000097">
    <property type="protein sequence ID" value="ABB26457.1"/>
    <property type="molecule type" value="Genomic_DNA"/>
</dbReference>
<dbReference type="RefSeq" id="WP_011360277.1">
    <property type="nucleotide sequence ID" value="NC_007513.1"/>
</dbReference>
<dbReference type="SMR" id="Q3AVE5"/>
<dbReference type="STRING" id="316279.Syncc9902_1499"/>
<dbReference type="KEGG" id="sye:Syncc9902_1499"/>
<dbReference type="eggNOG" id="COG0496">
    <property type="taxonomic scope" value="Bacteria"/>
</dbReference>
<dbReference type="HOGENOM" id="CLU_045192_1_3_3"/>
<dbReference type="OrthoDB" id="9780815at2"/>
<dbReference type="Proteomes" id="UP000002712">
    <property type="component" value="Chromosome"/>
</dbReference>
<dbReference type="GO" id="GO:0005737">
    <property type="term" value="C:cytoplasm"/>
    <property type="evidence" value="ECO:0007669"/>
    <property type="project" value="UniProtKB-SubCell"/>
</dbReference>
<dbReference type="GO" id="GO:0008254">
    <property type="term" value="F:3'-nucleotidase activity"/>
    <property type="evidence" value="ECO:0007669"/>
    <property type="project" value="TreeGrafter"/>
</dbReference>
<dbReference type="GO" id="GO:0008253">
    <property type="term" value="F:5'-nucleotidase activity"/>
    <property type="evidence" value="ECO:0007669"/>
    <property type="project" value="UniProtKB-UniRule"/>
</dbReference>
<dbReference type="GO" id="GO:0004309">
    <property type="term" value="F:exopolyphosphatase activity"/>
    <property type="evidence" value="ECO:0007669"/>
    <property type="project" value="TreeGrafter"/>
</dbReference>
<dbReference type="GO" id="GO:0046872">
    <property type="term" value="F:metal ion binding"/>
    <property type="evidence" value="ECO:0007669"/>
    <property type="project" value="UniProtKB-UniRule"/>
</dbReference>
<dbReference type="GO" id="GO:0000166">
    <property type="term" value="F:nucleotide binding"/>
    <property type="evidence" value="ECO:0007669"/>
    <property type="project" value="UniProtKB-KW"/>
</dbReference>
<dbReference type="Gene3D" id="3.40.1210.10">
    <property type="entry name" value="Survival protein SurE-like phosphatase/nucleotidase"/>
    <property type="match status" value="1"/>
</dbReference>
<dbReference type="HAMAP" id="MF_00060">
    <property type="entry name" value="SurE"/>
    <property type="match status" value="1"/>
</dbReference>
<dbReference type="InterPro" id="IPR030048">
    <property type="entry name" value="SurE"/>
</dbReference>
<dbReference type="InterPro" id="IPR002828">
    <property type="entry name" value="SurE-like_Pase/nucleotidase"/>
</dbReference>
<dbReference type="InterPro" id="IPR036523">
    <property type="entry name" value="SurE-like_sf"/>
</dbReference>
<dbReference type="NCBIfam" id="NF001490">
    <property type="entry name" value="PRK00346.1-4"/>
    <property type="match status" value="1"/>
</dbReference>
<dbReference type="NCBIfam" id="NF001492">
    <property type="entry name" value="PRK00346.2-2"/>
    <property type="match status" value="1"/>
</dbReference>
<dbReference type="NCBIfam" id="TIGR00087">
    <property type="entry name" value="surE"/>
    <property type="match status" value="1"/>
</dbReference>
<dbReference type="PANTHER" id="PTHR30457">
    <property type="entry name" value="5'-NUCLEOTIDASE SURE"/>
    <property type="match status" value="1"/>
</dbReference>
<dbReference type="PANTHER" id="PTHR30457:SF12">
    <property type="entry name" value="5'_3'-NUCLEOTIDASE SURE"/>
    <property type="match status" value="1"/>
</dbReference>
<dbReference type="Pfam" id="PF01975">
    <property type="entry name" value="SurE"/>
    <property type="match status" value="1"/>
</dbReference>
<dbReference type="SUPFAM" id="SSF64167">
    <property type="entry name" value="SurE-like"/>
    <property type="match status" value="1"/>
</dbReference>
<reference key="1">
    <citation type="submission" date="2005-08" db="EMBL/GenBank/DDBJ databases">
        <title>Complete sequence of Synechococcus sp. CC9902.</title>
        <authorList>
            <person name="Copeland A."/>
            <person name="Lucas S."/>
            <person name="Lapidus A."/>
            <person name="Barry K."/>
            <person name="Detter J.C."/>
            <person name="Glavina T."/>
            <person name="Hammon N."/>
            <person name="Israni S."/>
            <person name="Pitluck S."/>
            <person name="Martinez M."/>
            <person name="Schmutz J."/>
            <person name="Larimer F."/>
            <person name="Land M."/>
            <person name="Kyrpides N."/>
            <person name="Ivanova N."/>
            <person name="Richardson P."/>
        </authorList>
    </citation>
    <scope>NUCLEOTIDE SEQUENCE [LARGE SCALE GENOMIC DNA]</scope>
    <source>
        <strain>CC9902</strain>
    </source>
</reference>
<keyword id="KW-0963">Cytoplasm</keyword>
<keyword id="KW-0378">Hydrolase</keyword>
<keyword id="KW-0479">Metal-binding</keyword>
<keyword id="KW-0547">Nucleotide-binding</keyword>
<keyword id="KW-1185">Reference proteome</keyword>